<accession>Q5MZI2</accession>
<proteinExistence type="inferred from homology"/>
<comment type="function">
    <text evidence="1">NDH-1 shuttles electrons from an unknown electron donor, via FMN and iron-sulfur (Fe-S) centers, to quinones in the respiratory and/or the photosynthetic chain. The immediate electron acceptor for the enzyme in this species is believed to be plastoquinone. Couples the redox reaction to proton translocation, and thus conserves the redox energy in a proton gradient. Cyanobacterial NDH-1 also plays a role in inorganic carbon-concentration.</text>
</comment>
<comment type="catalytic activity">
    <reaction evidence="1">
        <text>a plastoquinone + NADH + (n+1) H(+)(in) = a plastoquinol + NAD(+) + n H(+)(out)</text>
        <dbReference type="Rhea" id="RHEA:42608"/>
        <dbReference type="Rhea" id="RHEA-COMP:9561"/>
        <dbReference type="Rhea" id="RHEA-COMP:9562"/>
        <dbReference type="ChEBI" id="CHEBI:15378"/>
        <dbReference type="ChEBI" id="CHEBI:17757"/>
        <dbReference type="ChEBI" id="CHEBI:57540"/>
        <dbReference type="ChEBI" id="CHEBI:57945"/>
        <dbReference type="ChEBI" id="CHEBI:62192"/>
    </reaction>
</comment>
<comment type="catalytic activity">
    <reaction evidence="1">
        <text>a plastoquinone + NADPH + (n+1) H(+)(in) = a plastoquinol + NADP(+) + n H(+)(out)</text>
        <dbReference type="Rhea" id="RHEA:42612"/>
        <dbReference type="Rhea" id="RHEA-COMP:9561"/>
        <dbReference type="Rhea" id="RHEA-COMP:9562"/>
        <dbReference type="ChEBI" id="CHEBI:15378"/>
        <dbReference type="ChEBI" id="CHEBI:17757"/>
        <dbReference type="ChEBI" id="CHEBI:57783"/>
        <dbReference type="ChEBI" id="CHEBI:58349"/>
        <dbReference type="ChEBI" id="CHEBI:62192"/>
    </reaction>
</comment>
<comment type="subunit">
    <text evidence="1">NDH-1 can be composed of about 15 different subunits; different subcomplexes with different compositions have been identified which probably have different functions.</text>
</comment>
<comment type="subcellular location">
    <subcellularLocation>
        <location evidence="1">Cellular thylakoid membrane</location>
        <topology evidence="1">Peripheral membrane protein</topology>
        <orientation evidence="1">Cytoplasmic side</orientation>
    </subcellularLocation>
</comment>
<comment type="similarity">
    <text evidence="1">Belongs to the complex I 49 kDa subunit family.</text>
</comment>
<evidence type="ECO:0000255" key="1">
    <source>
        <dbReference type="HAMAP-Rule" id="MF_01358"/>
    </source>
</evidence>
<name>NDHH_SYNP6</name>
<dbReference type="EC" id="7.1.1.-" evidence="1"/>
<dbReference type="EMBL" id="AP008231">
    <property type="protein sequence ID" value="BAD80538.1"/>
    <property type="molecule type" value="Genomic_DNA"/>
</dbReference>
<dbReference type="RefSeq" id="WP_011244658.1">
    <property type="nucleotide sequence ID" value="NZ_CP085785.1"/>
</dbReference>
<dbReference type="SMR" id="Q5MZI2"/>
<dbReference type="KEGG" id="syc:syc2348_c"/>
<dbReference type="eggNOG" id="COG0649">
    <property type="taxonomic scope" value="Bacteria"/>
</dbReference>
<dbReference type="Proteomes" id="UP000001175">
    <property type="component" value="Chromosome"/>
</dbReference>
<dbReference type="GO" id="GO:0031676">
    <property type="term" value="C:plasma membrane-derived thylakoid membrane"/>
    <property type="evidence" value="ECO:0007669"/>
    <property type="project" value="UniProtKB-SubCell"/>
</dbReference>
<dbReference type="GO" id="GO:0051287">
    <property type="term" value="F:NAD binding"/>
    <property type="evidence" value="ECO:0007669"/>
    <property type="project" value="InterPro"/>
</dbReference>
<dbReference type="GO" id="GO:0016655">
    <property type="term" value="F:oxidoreductase activity, acting on NAD(P)H, quinone or similar compound as acceptor"/>
    <property type="evidence" value="ECO:0007669"/>
    <property type="project" value="UniProtKB-UniRule"/>
</dbReference>
<dbReference type="GO" id="GO:0048038">
    <property type="term" value="F:quinone binding"/>
    <property type="evidence" value="ECO:0007669"/>
    <property type="project" value="UniProtKB-KW"/>
</dbReference>
<dbReference type="GO" id="GO:0019684">
    <property type="term" value="P:photosynthesis, light reaction"/>
    <property type="evidence" value="ECO:0007669"/>
    <property type="project" value="UniProtKB-UniRule"/>
</dbReference>
<dbReference type="Gene3D" id="1.10.645.10">
    <property type="entry name" value="Cytochrome-c3 Hydrogenase, chain B"/>
    <property type="match status" value="1"/>
</dbReference>
<dbReference type="HAMAP" id="MF_01358">
    <property type="entry name" value="NDH1_NuoD"/>
    <property type="match status" value="1"/>
</dbReference>
<dbReference type="InterPro" id="IPR001135">
    <property type="entry name" value="NADH_Q_OxRdtase_suD"/>
</dbReference>
<dbReference type="InterPro" id="IPR014029">
    <property type="entry name" value="NADH_UbQ_OxRdtase_49kDa_CS"/>
</dbReference>
<dbReference type="InterPro" id="IPR022885">
    <property type="entry name" value="NDH1_su_D/H"/>
</dbReference>
<dbReference type="InterPro" id="IPR029014">
    <property type="entry name" value="NiFe-Hase_large"/>
</dbReference>
<dbReference type="NCBIfam" id="TIGR01962">
    <property type="entry name" value="NuoD"/>
    <property type="match status" value="1"/>
</dbReference>
<dbReference type="NCBIfam" id="NF004739">
    <property type="entry name" value="PRK06075.1"/>
    <property type="match status" value="1"/>
</dbReference>
<dbReference type="NCBIfam" id="NF005649">
    <property type="entry name" value="PRK07415.1"/>
    <property type="match status" value="1"/>
</dbReference>
<dbReference type="PANTHER" id="PTHR11993:SF10">
    <property type="entry name" value="NADH DEHYDROGENASE [UBIQUINONE] IRON-SULFUR PROTEIN 2, MITOCHONDRIAL"/>
    <property type="match status" value="1"/>
</dbReference>
<dbReference type="PANTHER" id="PTHR11993">
    <property type="entry name" value="NADH-UBIQUINONE OXIDOREDUCTASE 49 KDA SUBUNIT"/>
    <property type="match status" value="1"/>
</dbReference>
<dbReference type="Pfam" id="PF00346">
    <property type="entry name" value="Complex1_49kDa"/>
    <property type="match status" value="1"/>
</dbReference>
<dbReference type="SUPFAM" id="SSF56762">
    <property type="entry name" value="HydB/Nqo4-like"/>
    <property type="match status" value="1"/>
</dbReference>
<dbReference type="PROSITE" id="PS00535">
    <property type="entry name" value="COMPLEX1_49K"/>
    <property type="match status" value="1"/>
</dbReference>
<organism>
    <name type="scientific">Synechococcus sp. (strain ATCC 27144 / PCC 6301 / SAUG 1402/1)</name>
    <name type="common">Anacystis nidulans</name>
    <dbReference type="NCBI Taxonomy" id="269084"/>
    <lineage>
        <taxon>Bacteria</taxon>
        <taxon>Bacillati</taxon>
        <taxon>Cyanobacteriota</taxon>
        <taxon>Cyanophyceae</taxon>
        <taxon>Synechococcales</taxon>
        <taxon>Synechococcaceae</taxon>
        <taxon>Synechococcus</taxon>
    </lineage>
</organism>
<protein>
    <recommendedName>
        <fullName evidence="1">NAD(P)H-quinone oxidoreductase subunit H</fullName>
        <ecNumber evidence="1">7.1.1.-</ecNumber>
    </recommendedName>
    <alternativeName>
        <fullName>NAD(P)H dehydrogenase subunit H</fullName>
    </alternativeName>
    <alternativeName>
        <fullName evidence="1">NADH-plastoquinone oxidoreductase subunit H</fullName>
    </alternativeName>
    <alternativeName>
        <fullName evidence="1">NDH-1 subunit H</fullName>
        <shortName evidence="1">NDH-H</shortName>
    </alternativeName>
</protein>
<sequence>MALLETRTEPMVLNMGPHHPSMHGVLRLIVTLDGENVIDCEPVIGYLHRGMEKIAENRSNVMFVPYVSRWDYAAGMFNEAITVNAPEKLANIPVPKRASYIRVIMLELNRIANHLLWLGPFLADVGAQTPFFYIFRERELIYDLWEAATGQRLINNNYFRIGGVAADLPYGWLEKCIDFCDYFQAKVDEYERLITDNPIFRRRVEGIGVISREEALNWSLSGPMLRGSGVKWDLRRVDHYECYDDFDWDVITAEEGDCFARYRVRVQEMRESLKIIRQACAGIPGGPYENLEARRMAEGKKSEWYGPDYQYVSKKVAPTFKIPAGEHYVRLESGKGELGVFIQGADDICPWRFKIRAPDFNNLQILPQLLQGVKVADIMAILGSIDVIMGSVDR</sequence>
<feature type="chain" id="PRO_0000371931" description="NAD(P)H-quinone oxidoreductase subunit H">
    <location>
        <begin position="1"/>
        <end position="394"/>
    </location>
</feature>
<keyword id="KW-0472">Membrane</keyword>
<keyword id="KW-0520">NAD</keyword>
<keyword id="KW-0521">NADP</keyword>
<keyword id="KW-0618">Plastoquinone</keyword>
<keyword id="KW-0874">Quinone</keyword>
<keyword id="KW-0793">Thylakoid</keyword>
<keyword id="KW-1278">Translocase</keyword>
<keyword id="KW-0813">Transport</keyword>
<gene>
    <name evidence="1" type="primary">ndhH</name>
    <name type="ordered locus">syc2348_c</name>
</gene>
<reference key="1">
    <citation type="journal article" date="2007" name="Photosyn. Res.">
        <title>Complete nucleotide sequence of the freshwater unicellular cyanobacterium Synechococcus elongatus PCC 6301 chromosome: gene content and organization.</title>
        <authorList>
            <person name="Sugita C."/>
            <person name="Ogata K."/>
            <person name="Shikata M."/>
            <person name="Jikuya H."/>
            <person name="Takano J."/>
            <person name="Furumichi M."/>
            <person name="Kanehisa M."/>
            <person name="Omata T."/>
            <person name="Sugiura M."/>
            <person name="Sugita M."/>
        </authorList>
    </citation>
    <scope>NUCLEOTIDE SEQUENCE [LARGE SCALE GENOMIC DNA]</scope>
    <source>
        <strain>ATCC 27144 / PCC 6301 / SAUG 1402/1</strain>
    </source>
</reference>